<reference key="1">
    <citation type="journal article" date="2004" name="Nat. Genet.">
        <title>Evidence in the Legionella pneumophila genome for exploitation of host cell functions and high genome plasticity.</title>
        <authorList>
            <person name="Cazalet C."/>
            <person name="Rusniok C."/>
            <person name="Brueggemann H."/>
            <person name="Zidane N."/>
            <person name="Magnier A."/>
            <person name="Ma L."/>
            <person name="Tichit M."/>
            <person name="Jarraud S."/>
            <person name="Bouchier C."/>
            <person name="Vandenesch F."/>
            <person name="Kunst F."/>
            <person name="Etienne J."/>
            <person name="Glaser P."/>
            <person name="Buchrieser C."/>
        </authorList>
    </citation>
    <scope>NUCLEOTIDE SEQUENCE [LARGE SCALE GENOMIC DNA]</scope>
    <source>
        <strain>Lens</strain>
    </source>
</reference>
<organism>
    <name type="scientific">Legionella pneumophila (strain Lens)</name>
    <dbReference type="NCBI Taxonomy" id="297245"/>
    <lineage>
        <taxon>Bacteria</taxon>
        <taxon>Pseudomonadati</taxon>
        <taxon>Pseudomonadota</taxon>
        <taxon>Gammaproteobacteria</taxon>
        <taxon>Legionellales</taxon>
        <taxon>Legionellaceae</taxon>
        <taxon>Legionella</taxon>
    </lineage>
</organism>
<gene>
    <name type="ordered locus">lpl2409</name>
</gene>
<accession>Q5WTW4</accession>
<dbReference type="EMBL" id="CR628337">
    <property type="protein sequence ID" value="CAH16649.1"/>
    <property type="molecule type" value="Genomic_DNA"/>
</dbReference>
<dbReference type="RefSeq" id="WP_011216370.1">
    <property type="nucleotide sequence ID" value="NC_006369.1"/>
</dbReference>
<dbReference type="SMR" id="Q5WTW4"/>
<dbReference type="KEGG" id="lpf:lpl2409"/>
<dbReference type="LegioList" id="lpl2409"/>
<dbReference type="HOGENOM" id="CLU_073529_0_1_6"/>
<dbReference type="Proteomes" id="UP000002517">
    <property type="component" value="Chromosome"/>
</dbReference>
<dbReference type="GO" id="GO:0046872">
    <property type="term" value="F:metal ion binding"/>
    <property type="evidence" value="ECO:0007669"/>
    <property type="project" value="UniProtKB-KW"/>
</dbReference>
<dbReference type="GO" id="GO:0008237">
    <property type="term" value="F:metallopeptidase activity"/>
    <property type="evidence" value="ECO:0007669"/>
    <property type="project" value="UniProtKB-KW"/>
</dbReference>
<dbReference type="GO" id="GO:0006508">
    <property type="term" value="P:proteolysis"/>
    <property type="evidence" value="ECO:0007669"/>
    <property type="project" value="UniProtKB-KW"/>
</dbReference>
<dbReference type="CDD" id="cd08071">
    <property type="entry name" value="MPN_DUF2466"/>
    <property type="match status" value="1"/>
</dbReference>
<dbReference type="Gene3D" id="3.40.140.10">
    <property type="entry name" value="Cytidine Deaminase, domain 2"/>
    <property type="match status" value="1"/>
</dbReference>
<dbReference type="InterPro" id="IPR037518">
    <property type="entry name" value="MPN"/>
</dbReference>
<dbReference type="InterPro" id="IPR025657">
    <property type="entry name" value="RadC_JAB"/>
</dbReference>
<dbReference type="InterPro" id="IPR010994">
    <property type="entry name" value="RuvA_2-like"/>
</dbReference>
<dbReference type="InterPro" id="IPR001405">
    <property type="entry name" value="UPF0758"/>
</dbReference>
<dbReference type="InterPro" id="IPR020891">
    <property type="entry name" value="UPF0758_CS"/>
</dbReference>
<dbReference type="InterPro" id="IPR046778">
    <property type="entry name" value="UPF0758_N"/>
</dbReference>
<dbReference type="NCBIfam" id="NF000642">
    <property type="entry name" value="PRK00024.1"/>
    <property type="match status" value="1"/>
</dbReference>
<dbReference type="NCBIfam" id="TIGR00608">
    <property type="entry name" value="radc"/>
    <property type="match status" value="1"/>
</dbReference>
<dbReference type="PANTHER" id="PTHR30471">
    <property type="entry name" value="DNA REPAIR PROTEIN RADC"/>
    <property type="match status" value="1"/>
</dbReference>
<dbReference type="PANTHER" id="PTHR30471:SF3">
    <property type="entry name" value="UPF0758 PROTEIN YEES-RELATED"/>
    <property type="match status" value="1"/>
</dbReference>
<dbReference type="Pfam" id="PF04002">
    <property type="entry name" value="RadC"/>
    <property type="match status" value="1"/>
</dbReference>
<dbReference type="Pfam" id="PF20582">
    <property type="entry name" value="UPF0758_N"/>
    <property type="match status" value="1"/>
</dbReference>
<dbReference type="SUPFAM" id="SSF47781">
    <property type="entry name" value="RuvA domain 2-like"/>
    <property type="match status" value="1"/>
</dbReference>
<dbReference type="PROSITE" id="PS50249">
    <property type="entry name" value="MPN"/>
    <property type="match status" value="1"/>
</dbReference>
<dbReference type="PROSITE" id="PS01302">
    <property type="entry name" value="UPF0758"/>
    <property type="match status" value="1"/>
</dbReference>
<protein>
    <recommendedName>
        <fullName>UPF0758 protein lpl2409</fullName>
    </recommendedName>
</protein>
<keyword id="KW-0378">Hydrolase</keyword>
<keyword id="KW-0479">Metal-binding</keyword>
<keyword id="KW-0482">Metalloprotease</keyword>
<keyword id="KW-0645">Protease</keyword>
<keyword id="KW-0862">Zinc</keyword>
<name>Y2409_LEGPL</name>
<feature type="chain" id="PRO_1000089822" description="UPF0758 protein lpl2409">
    <location>
        <begin position="1"/>
        <end position="227"/>
    </location>
</feature>
<feature type="domain" description="MPN" evidence="1">
    <location>
        <begin position="102"/>
        <end position="225"/>
    </location>
</feature>
<feature type="short sequence motif" description="JAMM motif" evidence="1">
    <location>
        <begin position="173"/>
        <end position="186"/>
    </location>
</feature>
<feature type="binding site" evidence="1">
    <location>
        <position position="173"/>
    </location>
    <ligand>
        <name>Zn(2+)</name>
        <dbReference type="ChEBI" id="CHEBI:29105"/>
        <note>catalytic</note>
    </ligand>
</feature>
<feature type="binding site" evidence="1">
    <location>
        <position position="175"/>
    </location>
    <ligand>
        <name>Zn(2+)</name>
        <dbReference type="ChEBI" id="CHEBI:29105"/>
        <note>catalytic</note>
    </ligand>
</feature>
<feature type="binding site" evidence="1">
    <location>
        <position position="186"/>
    </location>
    <ligand>
        <name>Zn(2+)</name>
        <dbReference type="ChEBI" id="CHEBI:29105"/>
        <note>catalytic</note>
    </ligand>
</feature>
<sequence length="227" mass="25699">MMVAHTAQQLDLREKLLTNGVHSLSDIELLAVFISSGNNKKSCLQLAYELTKHLGNLRNILNADLQSFKSIHGLGEVRYAQLQAAKEICHRSDFIDLQKEIRLSNTQQTYAFLKKRLRDYKNETFAALFLDNQHRIIAYEELFSGTINTATVYPRPIVERVLQLNAAALILAHNHPSGLSDASQQDLAITERIRDALDLVDARLLDHIVIGDNEVYSIFAENKWACN</sequence>
<comment type="similarity">
    <text evidence="2">Belongs to the UPF0758 family.</text>
</comment>
<proteinExistence type="inferred from homology"/>
<evidence type="ECO:0000255" key="1">
    <source>
        <dbReference type="PROSITE-ProRule" id="PRU01182"/>
    </source>
</evidence>
<evidence type="ECO:0000305" key="2"/>